<organism>
    <name type="scientific">Trichormus variabilis (strain ATCC 29413 / PCC 7937)</name>
    <name type="common">Anabaena variabilis</name>
    <dbReference type="NCBI Taxonomy" id="240292"/>
    <lineage>
        <taxon>Bacteria</taxon>
        <taxon>Bacillati</taxon>
        <taxon>Cyanobacteriota</taxon>
        <taxon>Cyanophyceae</taxon>
        <taxon>Nostocales</taxon>
        <taxon>Nostocaceae</taxon>
        <taxon>Trichormus</taxon>
    </lineage>
</organism>
<feature type="chain" id="PRO_0000240886" description="Cysteine--tRNA ligase">
    <location>
        <begin position="1"/>
        <end position="486"/>
    </location>
</feature>
<feature type="short sequence motif" description="'HIGH' region">
    <location>
        <begin position="31"/>
        <end position="41"/>
    </location>
</feature>
<feature type="short sequence motif" description="'KMSKS' region">
    <location>
        <begin position="271"/>
        <end position="275"/>
    </location>
</feature>
<feature type="binding site" evidence="1">
    <location>
        <position position="29"/>
    </location>
    <ligand>
        <name>Zn(2+)</name>
        <dbReference type="ChEBI" id="CHEBI:29105"/>
    </ligand>
</feature>
<feature type="binding site" evidence="1">
    <location>
        <position position="214"/>
    </location>
    <ligand>
        <name>Zn(2+)</name>
        <dbReference type="ChEBI" id="CHEBI:29105"/>
    </ligand>
</feature>
<feature type="binding site" evidence="1">
    <location>
        <position position="239"/>
    </location>
    <ligand>
        <name>Zn(2+)</name>
        <dbReference type="ChEBI" id="CHEBI:29105"/>
    </ligand>
</feature>
<feature type="binding site" evidence="1">
    <location>
        <position position="243"/>
    </location>
    <ligand>
        <name>Zn(2+)</name>
        <dbReference type="ChEBI" id="CHEBI:29105"/>
    </ligand>
</feature>
<feature type="binding site" evidence="1">
    <location>
        <position position="274"/>
    </location>
    <ligand>
        <name>ATP</name>
        <dbReference type="ChEBI" id="CHEBI:30616"/>
    </ligand>
</feature>
<proteinExistence type="inferred from homology"/>
<dbReference type="EC" id="6.1.1.16" evidence="1"/>
<dbReference type="EMBL" id="CP000117">
    <property type="protein sequence ID" value="ABA23323.1"/>
    <property type="molecule type" value="Genomic_DNA"/>
</dbReference>
<dbReference type="SMR" id="Q3M6R3"/>
<dbReference type="STRING" id="240292.Ava_3718"/>
<dbReference type="KEGG" id="ava:Ava_3718"/>
<dbReference type="eggNOG" id="COG0215">
    <property type="taxonomic scope" value="Bacteria"/>
</dbReference>
<dbReference type="HOGENOM" id="CLU_013528_0_1_3"/>
<dbReference type="Proteomes" id="UP000002533">
    <property type="component" value="Chromosome"/>
</dbReference>
<dbReference type="GO" id="GO:0005829">
    <property type="term" value="C:cytosol"/>
    <property type="evidence" value="ECO:0007669"/>
    <property type="project" value="TreeGrafter"/>
</dbReference>
<dbReference type="GO" id="GO:0005524">
    <property type="term" value="F:ATP binding"/>
    <property type="evidence" value="ECO:0007669"/>
    <property type="project" value="UniProtKB-UniRule"/>
</dbReference>
<dbReference type="GO" id="GO:0004817">
    <property type="term" value="F:cysteine-tRNA ligase activity"/>
    <property type="evidence" value="ECO:0007669"/>
    <property type="project" value="UniProtKB-UniRule"/>
</dbReference>
<dbReference type="GO" id="GO:0008270">
    <property type="term" value="F:zinc ion binding"/>
    <property type="evidence" value="ECO:0007669"/>
    <property type="project" value="UniProtKB-UniRule"/>
</dbReference>
<dbReference type="GO" id="GO:0006423">
    <property type="term" value="P:cysteinyl-tRNA aminoacylation"/>
    <property type="evidence" value="ECO:0007669"/>
    <property type="project" value="UniProtKB-UniRule"/>
</dbReference>
<dbReference type="CDD" id="cd00672">
    <property type="entry name" value="CysRS_core"/>
    <property type="match status" value="1"/>
</dbReference>
<dbReference type="FunFam" id="3.40.50.620:FF:000009">
    <property type="entry name" value="Cysteine--tRNA ligase"/>
    <property type="match status" value="1"/>
</dbReference>
<dbReference type="Gene3D" id="1.20.120.1910">
    <property type="entry name" value="Cysteine-tRNA ligase, C-terminal anti-codon recognition domain"/>
    <property type="match status" value="1"/>
</dbReference>
<dbReference type="Gene3D" id="3.40.50.620">
    <property type="entry name" value="HUPs"/>
    <property type="match status" value="1"/>
</dbReference>
<dbReference type="HAMAP" id="MF_00041">
    <property type="entry name" value="Cys_tRNA_synth"/>
    <property type="match status" value="1"/>
</dbReference>
<dbReference type="InterPro" id="IPR015803">
    <property type="entry name" value="Cys-tRNA-ligase"/>
</dbReference>
<dbReference type="InterPro" id="IPR015273">
    <property type="entry name" value="Cys-tRNA-synt_Ia_DALR"/>
</dbReference>
<dbReference type="InterPro" id="IPR024909">
    <property type="entry name" value="Cys-tRNA/MSH_ligase"/>
</dbReference>
<dbReference type="InterPro" id="IPR056411">
    <property type="entry name" value="CysS_C"/>
</dbReference>
<dbReference type="InterPro" id="IPR014729">
    <property type="entry name" value="Rossmann-like_a/b/a_fold"/>
</dbReference>
<dbReference type="InterPro" id="IPR032678">
    <property type="entry name" value="tRNA-synt_1_cat_dom"/>
</dbReference>
<dbReference type="InterPro" id="IPR009080">
    <property type="entry name" value="tRNAsynth_Ia_anticodon-bd"/>
</dbReference>
<dbReference type="NCBIfam" id="TIGR00435">
    <property type="entry name" value="cysS"/>
    <property type="match status" value="1"/>
</dbReference>
<dbReference type="PANTHER" id="PTHR10890:SF3">
    <property type="entry name" value="CYSTEINE--TRNA LIGASE, CYTOPLASMIC"/>
    <property type="match status" value="1"/>
</dbReference>
<dbReference type="PANTHER" id="PTHR10890">
    <property type="entry name" value="CYSTEINYL-TRNA SYNTHETASE"/>
    <property type="match status" value="1"/>
</dbReference>
<dbReference type="Pfam" id="PF23493">
    <property type="entry name" value="CysS_C"/>
    <property type="match status" value="1"/>
</dbReference>
<dbReference type="Pfam" id="PF09190">
    <property type="entry name" value="DALR_2"/>
    <property type="match status" value="1"/>
</dbReference>
<dbReference type="Pfam" id="PF01406">
    <property type="entry name" value="tRNA-synt_1e"/>
    <property type="match status" value="1"/>
</dbReference>
<dbReference type="PRINTS" id="PR00983">
    <property type="entry name" value="TRNASYNTHCYS"/>
</dbReference>
<dbReference type="SMART" id="SM00840">
    <property type="entry name" value="DALR_2"/>
    <property type="match status" value="1"/>
</dbReference>
<dbReference type="SUPFAM" id="SSF47323">
    <property type="entry name" value="Anticodon-binding domain of a subclass of class I aminoacyl-tRNA synthetases"/>
    <property type="match status" value="1"/>
</dbReference>
<dbReference type="SUPFAM" id="SSF52374">
    <property type="entry name" value="Nucleotidylyl transferase"/>
    <property type="match status" value="1"/>
</dbReference>
<protein>
    <recommendedName>
        <fullName evidence="1">Cysteine--tRNA ligase</fullName>
        <ecNumber evidence="1">6.1.1.16</ecNumber>
    </recommendedName>
    <alternativeName>
        <fullName evidence="1">Cysteinyl-tRNA synthetase</fullName>
        <shortName evidence="1">CysRS</shortName>
    </alternativeName>
</protein>
<gene>
    <name evidence="1" type="primary">cysS</name>
    <name type="ordered locus">Ava_3718</name>
</gene>
<evidence type="ECO:0000255" key="1">
    <source>
        <dbReference type="HAMAP-Rule" id="MF_00041"/>
    </source>
</evidence>
<accession>Q3M6R3</accession>
<keyword id="KW-0030">Aminoacyl-tRNA synthetase</keyword>
<keyword id="KW-0067">ATP-binding</keyword>
<keyword id="KW-0963">Cytoplasm</keyword>
<keyword id="KW-0436">Ligase</keyword>
<keyword id="KW-0479">Metal-binding</keyword>
<keyword id="KW-0547">Nucleotide-binding</keyword>
<keyword id="KW-0648">Protein biosynthesis</keyword>
<keyword id="KW-0862">Zinc</keyword>
<reference key="1">
    <citation type="journal article" date="2014" name="Stand. Genomic Sci.">
        <title>Complete genome sequence of Anabaena variabilis ATCC 29413.</title>
        <authorList>
            <person name="Thiel T."/>
            <person name="Pratte B.S."/>
            <person name="Zhong J."/>
            <person name="Goodwin L."/>
            <person name="Copeland A."/>
            <person name="Lucas S."/>
            <person name="Han C."/>
            <person name="Pitluck S."/>
            <person name="Land M.L."/>
            <person name="Kyrpides N.C."/>
            <person name="Woyke T."/>
        </authorList>
    </citation>
    <scope>NUCLEOTIDE SEQUENCE [LARGE SCALE GENOMIC DNA]</scope>
    <source>
        <strain>ATCC 29413 / PCC 7937</strain>
    </source>
</reference>
<sequence>MTLTIYNTLTRRQEPLETVEPGKVKMYCCGVTVYDYCHLGHARSYIVWDTIRRYLIWRGFEVKYIQNFTDIDDKILNRAKEQGSTMAEVSNRFIDAYFADIRRLNVLDADEYPRVTEHIPEIHQLIQILEEKGLAYAVGGDVYYRVERFPSYGKLSGRELEQMQAGASGRVDVEDSEPKKQHPFDFALWKAAKPGEPAWDSPWGQGRPGWHIECSAMIRSKLGATIDIHGGGGDLIFPHHENEIAQSEAAMNQPLARYWTHNGMVMVNGQKMSKSLGNFITIRELLDGVGSWKGDPVNPMAVRLFVLQAHYRKPLDFTEEAIANAENSWKTLKEGLLFGYQYGEKLGWGQESAIIPELATRFQELGDDDFNFSGGLAVLFELAKELRREGNILVHEGTTKTPSDELQRQWNTLVTLGKVLGLEATPDDETLTQPGLSDTDIEALIEQRQAARKNKNFSESDRIRNELQAQGVTLIDSPQGTRWHRS</sequence>
<comment type="catalytic activity">
    <reaction evidence="1">
        <text>tRNA(Cys) + L-cysteine + ATP = L-cysteinyl-tRNA(Cys) + AMP + diphosphate</text>
        <dbReference type="Rhea" id="RHEA:17773"/>
        <dbReference type="Rhea" id="RHEA-COMP:9661"/>
        <dbReference type="Rhea" id="RHEA-COMP:9679"/>
        <dbReference type="ChEBI" id="CHEBI:30616"/>
        <dbReference type="ChEBI" id="CHEBI:33019"/>
        <dbReference type="ChEBI" id="CHEBI:35235"/>
        <dbReference type="ChEBI" id="CHEBI:78442"/>
        <dbReference type="ChEBI" id="CHEBI:78517"/>
        <dbReference type="ChEBI" id="CHEBI:456215"/>
        <dbReference type="EC" id="6.1.1.16"/>
    </reaction>
</comment>
<comment type="cofactor">
    <cofactor evidence="1">
        <name>Zn(2+)</name>
        <dbReference type="ChEBI" id="CHEBI:29105"/>
    </cofactor>
    <text evidence="1">Binds 1 zinc ion per subunit.</text>
</comment>
<comment type="subunit">
    <text evidence="1">Monomer.</text>
</comment>
<comment type="subcellular location">
    <subcellularLocation>
        <location evidence="1">Cytoplasm</location>
    </subcellularLocation>
</comment>
<comment type="similarity">
    <text evidence="1">Belongs to the class-I aminoacyl-tRNA synthetase family.</text>
</comment>
<name>SYC_TRIV2</name>